<keyword id="KW-0002">3D-structure</keyword>
<keyword id="KW-0963">Cytoplasm</keyword>
<keyword id="KW-0489">Methyltransferase</keyword>
<keyword id="KW-0545">Nucleotide biosynthesis</keyword>
<keyword id="KW-0808">Transferase</keyword>
<comment type="function">
    <text evidence="1">Catalyzes the reductive methylation of 2'-deoxyuridine-5'-monophosphate (dUMP) to 2'-deoxythymidine-5'-monophosphate (dTMP) while utilizing 5,10-methylenetetrahydrofolate (mTHF) as the methyl donor and reductant in the reaction, yielding dihydrofolate (DHF) as a by-product. This enzymatic reaction provides an intracellular de novo source of dTMP, an essential precursor for DNA biosynthesis.</text>
</comment>
<comment type="catalytic activity">
    <reaction evidence="1">
        <text>dUMP + (6R)-5,10-methylene-5,6,7,8-tetrahydrofolate = 7,8-dihydrofolate + dTMP</text>
        <dbReference type="Rhea" id="RHEA:12104"/>
        <dbReference type="ChEBI" id="CHEBI:15636"/>
        <dbReference type="ChEBI" id="CHEBI:57451"/>
        <dbReference type="ChEBI" id="CHEBI:63528"/>
        <dbReference type="ChEBI" id="CHEBI:246422"/>
        <dbReference type="EC" id="2.1.1.45"/>
    </reaction>
</comment>
<comment type="pathway">
    <text evidence="1">Pyrimidine metabolism; dTTP biosynthesis.</text>
</comment>
<comment type="subunit">
    <text evidence="1">Homodimer.</text>
</comment>
<comment type="subcellular location">
    <subcellularLocation>
        <location evidence="1">Cytoplasm</location>
    </subcellularLocation>
</comment>
<comment type="similarity">
    <text evidence="1">Belongs to the thymidylate synthase family. Bacterial-type ThyA subfamily.</text>
</comment>
<name>TYSY_ACIB5</name>
<organism>
    <name type="scientific">Acinetobacter baumannii (strain AB0057)</name>
    <dbReference type="NCBI Taxonomy" id="480119"/>
    <lineage>
        <taxon>Bacteria</taxon>
        <taxon>Pseudomonadati</taxon>
        <taxon>Pseudomonadota</taxon>
        <taxon>Gammaproteobacteria</taxon>
        <taxon>Moraxellales</taxon>
        <taxon>Moraxellaceae</taxon>
        <taxon>Acinetobacter</taxon>
        <taxon>Acinetobacter calcoaceticus/baumannii complex</taxon>
    </lineage>
</organism>
<reference key="1">
    <citation type="journal article" date="2008" name="J. Bacteriol.">
        <title>Comparative genome sequence analysis of multidrug-resistant Acinetobacter baumannii.</title>
        <authorList>
            <person name="Adams M.D."/>
            <person name="Goglin K."/>
            <person name="Molyneaux N."/>
            <person name="Hujer K.M."/>
            <person name="Lavender H."/>
            <person name="Jamison J.J."/>
            <person name="MacDonald I.J."/>
            <person name="Martin K.M."/>
            <person name="Russo T."/>
            <person name="Campagnari A.A."/>
            <person name="Hujer A.M."/>
            <person name="Bonomo R.A."/>
            <person name="Gill S.R."/>
        </authorList>
    </citation>
    <scope>NUCLEOTIDE SEQUENCE [LARGE SCALE GENOMIC DNA]</scope>
    <source>
        <strain>AB0057</strain>
    </source>
</reference>
<evidence type="ECO:0000255" key="1">
    <source>
        <dbReference type="HAMAP-Rule" id="MF_00008"/>
    </source>
</evidence>
<evidence type="ECO:0007829" key="2">
    <source>
        <dbReference type="PDB" id="7TA9"/>
    </source>
</evidence>
<sequence length="280" mass="31826">MRAYLDLLQHILDNGGDKGDRTGTGTRSVFGHQMRFDLSKGFPLLTTKKVHFRSIVIELLWFLKGDTNVKYLQDNKVTIWDEWATAEQTARFGRPEHELGPVYGHQWRNFGATKNADGTYNQDGFDQIKWLINEIKTNPNSRRLIVSGWNPNEAGQVALPPCHTLFQFFVQDNKLSCQLYQRSADVFLGVPFNIASYALLTHMIAQVCGLGVGDFVWTGGDTHLYANHFEQAKLQLTREPLPLCQLKLNPEVKDIFDFKFEDIEIVGYESHPAIKAPVAV</sequence>
<accession>B7I4U0</accession>
<proteinExistence type="evidence at protein level"/>
<protein>
    <recommendedName>
        <fullName evidence="1">Thymidylate synthase</fullName>
        <shortName evidence="1">TS</shortName>
        <shortName evidence="1">TSase</shortName>
        <ecNumber evidence="1">2.1.1.45</ecNumber>
    </recommendedName>
</protein>
<dbReference type="EC" id="2.1.1.45" evidence="1"/>
<dbReference type="EMBL" id="CP001182">
    <property type="protein sequence ID" value="ACJ39962.1"/>
    <property type="molecule type" value="Genomic_DNA"/>
</dbReference>
<dbReference type="RefSeq" id="WP_001203170.1">
    <property type="nucleotide sequence ID" value="NC_011586.2"/>
</dbReference>
<dbReference type="PDB" id="7TA9">
    <property type="method" value="X-ray"/>
    <property type="resolution" value="1.50 A"/>
    <property type="chains" value="A/B=1-280"/>
</dbReference>
<dbReference type="PDBsum" id="7TA9"/>
<dbReference type="SMR" id="B7I4U0"/>
<dbReference type="KEGG" id="abn:AB57_0541"/>
<dbReference type="HOGENOM" id="CLU_021669_0_0_6"/>
<dbReference type="UniPathway" id="UPA00575"/>
<dbReference type="Proteomes" id="UP000007094">
    <property type="component" value="Chromosome"/>
</dbReference>
<dbReference type="GO" id="GO:0005829">
    <property type="term" value="C:cytosol"/>
    <property type="evidence" value="ECO:0007669"/>
    <property type="project" value="TreeGrafter"/>
</dbReference>
<dbReference type="GO" id="GO:0004799">
    <property type="term" value="F:thymidylate synthase activity"/>
    <property type="evidence" value="ECO:0007669"/>
    <property type="project" value="UniProtKB-UniRule"/>
</dbReference>
<dbReference type="GO" id="GO:0006231">
    <property type="term" value="P:dTMP biosynthetic process"/>
    <property type="evidence" value="ECO:0007669"/>
    <property type="project" value="UniProtKB-UniRule"/>
</dbReference>
<dbReference type="GO" id="GO:0006235">
    <property type="term" value="P:dTTP biosynthetic process"/>
    <property type="evidence" value="ECO:0007669"/>
    <property type="project" value="UniProtKB-UniRule"/>
</dbReference>
<dbReference type="GO" id="GO:0032259">
    <property type="term" value="P:methylation"/>
    <property type="evidence" value="ECO:0007669"/>
    <property type="project" value="UniProtKB-KW"/>
</dbReference>
<dbReference type="CDD" id="cd00351">
    <property type="entry name" value="TS_Pyrimidine_HMase"/>
    <property type="match status" value="1"/>
</dbReference>
<dbReference type="FunFam" id="3.30.572.10:FF:000013">
    <property type="entry name" value="Thymidylate synthase"/>
    <property type="match status" value="1"/>
</dbReference>
<dbReference type="Gene3D" id="3.30.572.10">
    <property type="entry name" value="Thymidylate synthase/dCMP hydroxymethylase domain"/>
    <property type="match status" value="1"/>
</dbReference>
<dbReference type="HAMAP" id="MF_00008">
    <property type="entry name" value="Thymidy_synth_bact"/>
    <property type="match status" value="1"/>
</dbReference>
<dbReference type="InterPro" id="IPR045097">
    <property type="entry name" value="Thymidate_synth/dCMP_Mease"/>
</dbReference>
<dbReference type="InterPro" id="IPR023451">
    <property type="entry name" value="Thymidate_synth/dCMP_Mease_dom"/>
</dbReference>
<dbReference type="InterPro" id="IPR036926">
    <property type="entry name" value="Thymidate_synth/dCMP_Mease_sf"/>
</dbReference>
<dbReference type="InterPro" id="IPR000398">
    <property type="entry name" value="Thymidylate_synthase"/>
</dbReference>
<dbReference type="InterPro" id="IPR020940">
    <property type="entry name" value="Thymidylate_synthase_AS"/>
</dbReference>
<dbReference type="NCBIfam" id="NF002497">
    <property type="entry name" value="PRK01827.1-3"/>
    <property type="match status" value="1"/>
</dbReference>
<dbReference type="NCBIfam" id="NF002499">
    <property type="entry name" value="PRK01827.1-5"/>
    <property type="match status" value="1"/>
</dbReference>
<dbReference type="NCBIfam" id="TIGR03284">
    <property type="entry name" value="thym_sym"/>
    <property type="match status" value="1"/>
</dbReference>
<dbReference type="PANTHER" id="PTHR11548:SF9">
    <property type="entry name" value="THYMIDYLATE SYNTHASE"/>
    <property type="match status" value="1"/>
</dbReference>
<dbReference type="PANTHER" id="PTHR11548">
    <property type="entry name" value="THYMIDYLATE SYNTHASE 1"/>
    <property type="match status" value="1"/>
</dbReference>
<dbReference type="Pfam" id="PF00303">
    <property type="entry name" value="Thymidylat_synt"/>
    <property type="match status" value="1"/>
</dbReference>
<dbReference type="PRINTS" id="PR00108">
    <property type="entry name" value="THYMDSNTHASE"/>
</dbReference>
<dbReference type="SUPFAM" id="SSF55831">
    <property type="entry name" value="Thymidylate synthase/dCMP hydroxymethylase"/>
    <property type="match status" value="1"/>
</dbReference>
<dbReference type="PROSITE" id="PS00091">
    <property type="entry name" value="THYMIDYLATE_SYNTHASE"/>
    <property type="match status" value="1"/>
</dbReference>
<gene>
    <name evidence="1" type="primary">thyA</name>
    <name type="ordered locus">AB57_0541</name>
</gene>
<feature type="chain" id="PRO_1000197228" description="Thymidylate synthase">
    <location>
        <begin position="1"/>
        <end position="280"/>
    </location>
</feature>
<feature type="active site" description="Nucleophile" evidence="1">
    <location>
        <position position="162"/>
    </location>
</feature>
<feature type="binding site" description="in other chain" evidence="1">
    <location>
        <position position="21"/>
    </location>
    <ligand>
        <name>dUMP</name>
        <dbReference type="ChEBI" id="CHEBI:246422"/>
        <note>ligand shared between dimeric partners</note>
    </ligand>
</feature>
<feature type="binding site" evidence="1">
    <location>
        <position position="51"/>
    </location>
    <ligand>
        <name>(6R)-5,10-methylene-5,6,7,8-tetrahydrofolate</name>
        <dbReference type="ChEBI" id="CHEBI:15636"/>
    </ligand>
</feature>
<feature type="binding site" evidence="1">
    <location>
        <begin position="142"/>
        <end position="143"/>
    </location>
    <ligand>
        <name>dUMP</name>
        <dbReference type="ChEBI" id="CHEBI:246422"/>
        <note>ligand shared between dimeric partners</note>
    </ligand>
</feature>
<feature type="binding site" description="in other chain" evidence="1">
    <location>
        <begin position="182"/>
        <end position="185"/>
    </location>
    <ligand>
        <name>dUMP</name>
        <dbReference type="ChEBI" id="CHEBI:246422"/>
        <note>ligand shared between dimeric partners</note>
    </ligand>
</feature>
<feature type="binding site" evidence="1">
    <location>
        <position position="185"/>
    </location>
    <ligand>
        <name>(6R)-5,10-methylene-5,6,7,8-tetrahydrofolate</name>
        <dbReference type="ChEBI" id="CHEBI:15636"/>
    </ligand>
</feature>
<feature type="binding site" description="in other chain" evidence="1">
    <location>
        <position position="193"/>
    </location>
    <ligand>
        <name>dUMP</name>
        <dbReference type="ChEBI" id="CHEBI:246422"/>
        <note>ligand shared between dimeric partners</note>
    </ligand>
</feature>
<feature type="binding site" description="in other chain" evidence="1">
    <location>
        <begin position="223"/>
        <end position="225"/>
    </location>
    <ligand>
        <name>dUMP</name>
        <dbReference type="ChEBI" id="CHEBI:246422"/>
        <note>ligand shared between dimeric partners</note>
    </ligand>
</feature>
<feature type="binding site" evidence="1">
    <location>
        <position position="279"/>
    </location>
    <ligand>
        <name>(6R)-5,10-methylene-5,6,7,8-tetrahydrofolate</name>
        <dbReference type="ChEBI" id="CHEBI:15636"/>
    </ligand>
</feature>
<feature type="helix" evidence="2">
    <location>
        <begin position="1"/>
        <end position="14"/>
    </location>
</feature>
<feature type="strand" evidence="2">
    <location>
        <begin position="16"/>
        <end position="18"/>
    </location>
</feature>
<feature type="strand" evidence="2">
    <location>
        <begin position="21"/>
        <end position="23"/>
    </location>
</feature>
<feature type="strand" evidence="2">
    <location>
        <begin position="26"/>
        <end position="37"/>
    </location>
</feature>
<feature type="helix" evidence="2">
    <location>
        <begin position="38"/>
        <end position="40"/>
    </location>
</feature>
<feature type="helix" evidence="2">
    <location>
        <begin position="49"/>
        <end position="63"/>
    </location>
</feature>
<feature type="helix" evidence="2">
    <location>
        <begin position="70"/>
        <end position="74"/>
    </location>
</feature>
<feature type="helix" evidence="2">
    <location>
        <begin position="81"/>
        <end position="83"/>
    </location>
</feature>
<feature type="helix" evidence="2">
    <location>
        <begin position="86"/>
        <end position="90"/>
    </location>
</feature>
<feature type="turn" evidence="2">
    <location>
        <begin position="91"/>
        <end position="93"/>
    </location>
</feature>
<feature type="helix" evidence="2">
    <location>
        <begin position="103"/>
        <end position="109"/>
    </location>
</feature>
<feature type="strand" evidence="2">
    <location>
        <begin position="118"/>
        <end position="120"/>
    </location>
</feature>
<feature type="helix" evidence="2">
    <location>
        <begin position="127"/>
        <end position="137"/>
    </location>
</feature>
<feature type="strand" evidence="2">
    <location>
        <begin position="145"/>
        <end position="147"/>
    </location>
</feature>
<feature type="helix" evidence="2">
    <location>
        <begin position="151"/>
        <end position="154"/>
    </location>
</feature>
<feature type="strand" evidence="2">
    <location>
        <begin position="157"/>
        <end position="159"/>
    </location>
</feature>
<feature type="strand" evidence="2">
    <location>
        <begin position="162"/>
        <end position="171"/>
    </location>
</feature>
<feature type="strand" evidence="2">
    <location>
        <begin position="174"/>
        <end position="185"/>
    </location>
</feature>
<feature type="turn" evidence="2">
    <location>
        <begin position="186"/>
        <end position="189"/>
    </location>
</feature>
<feature type="helix" evidence="2">
    <location>
        <begin position="190"/>
        <end position="207"/>
    </location>
</feature>
<feature type="strand" evidence="2">
    <location>
        <begin position="211"/>
        <end position="225"/>
    </location>
</feature>
<feature type="helix" evidence="2">
    <location>
        <begin position="226"/>
        <end position="228"/>
    </location>
</feature>
<feature type="helix" evidence="2">
    <location>
        <begin position="229"/>
        <end position="236"/>
    </location>
</feature>
<feature type="strand" evidence="2">
    <location>
        <begin position="244"/>
        <end position="248"/>
    </location>
</feature>
<feature type="helix" evidence="2">
    <location>
        <begin position="255"/>
        <end position="257"/>
    </location>
</feature>
<feature type="helix" evidence="2">
    <location>
        <begin position="260"/>
        <end position="262"/>
    </location>
</feature>
<feature type="strand" evidence="2">
    <location>
        <begin position="263"/>
        <end position="267"/>
    </location>
</feature>